<comment type="function">
    <text evidence="1">An accessory protein needed during the final step in the assembly of 30S ribosomal subunit, possibly for assembly of the head region. Essential for efficient processing of 16S rRNA. May be needed both before and after RbfA during the maturation of 16S rRNA. It has affinity for free ribosomal 30S subunits but not for 70S ribosomes.</text>
</comment>
<comment type="subunit">
    <text evidence="1">Binds ribosomal protein uS19.</text>
</comment>
<comment type="subcellular location">
    <subcellularLocation>
        <location evidence="1">Cytoplasm</location>
    </subcellularLocation>
</comment>
<comment type="domain">
    <text evidence="1">The PRC barrel domain binds ribosomal protein uS19.</text>
</comment>
<comment type="similarity">
    <text evidence="1">Belongs to the RimM family.</text>
</comment>
<sequence length="172" mass="20088">MEYFNVGKIVNTQGLQGEMRVLSVSDFTEERFQKGARLALFDDKDRFVQEVEIASHRKHKQFDIIKFKGMYHINAIEQFKGYNLKIAKEHQGKLAEGEFYYHQIIGLEVYEKDQLVGEIKEILQPGANDVWVVKRQSKRDLLLPYIPSVVLCVDIEKHRVDVEIMEGLDDED</sequence>
<proteinExistence type="inferred from homology"/>
<protein>
    <recommendedName>
        <fullName evidence="1">Ribosome maturation factor RimM</fullName>
    </recommendedName>
</protein>
<evidence type="ECO:0000255" key="1">
    <source>
        <dbReference type="HAMAP-Rule" id="MF_00014"/>
    </source>
</evidence>
<name>RIMM_STREM</name>
<accession>B4U396</accession>
<reference key="1">
    <citation type="journal article" date="2008" name="PLoS ONE">
        <title>Genome sequence of a lancefield group C Streptococcus zooepidemicus strain causing epidemic nephritis: new information about an old disease.</title>
        <authorList>
            <person name="Beres S.B."/>
            <person name="Sesso R."/>
            <person name="Pinto S.W.L."/>
            <person name="Hoe N.P."/>
            <person name="Porcella S.F."/>
            <person name="Deleo F.R."/>
            <person name="Musser J.M."/>
        </authorList>
    </citation>
    <scope>NUCLEOTIDE SEQUENCE [LARGE SCALE GENOMIC DNA]</scope>
    <source>
        <strain>MGCS10565</strain>
    </source>
</reference>
<dbReference type="EMBL" id="CP001129">
    <property type="protein sequence ID" value="ACG62463.1"/>
    <property type="molecule type" value="Genomic_DNA"/>
</dbReference>
<dbReference type="RefSeq" id="WP_012515731.1">
    <property type="nucleotide sequence ID" value="NC_011134.1"/>
</dbReference>
<dbReference type="SMR" id="B4U396"/>
<dbReference type="KEGG" id="sez:Sez_1111"/>
<dbReference type="HOGENOM" id="CLU_077636_3_1_9"/>
<dbReference type="Proteomes" id="UP000001873">
    <property type="component" value="Chromosome"/>
</dbReference>
<dbReference type="GO" id="GO:0005737">
    <property type="term" value="C:cytoplasm"/>
    <property type="evidence" value="ECO:0007669"/>
    <property type="project" value="UniProtKB-SubCell"/>
</dbReference>
<dbReference type="GO" id="GO:0005840">
    <property type="term" value="C:ribosome"/>
    <property type="evidence" value="ECO:0007669"/>
    <property type="project" value="InterPro"/>
</dbReference>
<dbReference type="GO" id="GO:0043022">
    <property type="term" value="F:ribosome binding"/>
    <property type="evidence" value="ECO:0007669"/>
    <property type="project" value="InterPro"/>
</dbReference>
<dbReference type="GO" id="GO:0042274">
    <property type="term" value="P:ribosomal small subunit biogenesis"/>
    <property type="evidence" value="ECO:0007669"/>
    <property type="project" value="UniProtKB-UniRule"/>
</dbReference>
<dbReference type="GO" id="GO:0006364">
    <property type="term" value="P:rRNA processing"/>
    <property type="evidence" value="ECO:0007669"/>
    <property type="project" value="UniProtKB-UniRule"/>
</dbReference>
<dbReference type="Gene3D" id="2.30.30.240">
    <property type="entry name" value="PRC-barrel domain"/>
    <property type="match status" value="1"/>
</dbReference>
<dbReference type="Gene3D" id="2.40.30.60">
    <property type="entry name" value="RimM"/>
    <property type="match status" value="1"/>
</dbReference>
<dbReference type="HAMAP" id="MF_00014">
    <property type="entry name" value="Ribosome_mat_RimM"/>
    <property type="match status" value="1"/>
</dbReference>
<dbReference type="InterPro" id="IPR027275">
    <property type="entry name" value="PRC-brl_dom"/>
</dbReference>
<dbReference type="InterPro" id="IPR011033">
    <property type="entry name" value="PRC_barrel-like_sf"/>
</dbReference>
<dbReference type="InterPro" id="IPR011961">
    <property type="entry name" value="RimM"/>
</dbReference>
<dbReference type="InterPro" id="IPR002676">
    <property type="entry name" value="RimM_N"/>
</dbReference>
<dbReference type="InterPro" id="IPR036976">
    <property type="entry name" value="RimM_N_sf"/>
</dbReference>
<dbReference type="InterPro" id="IPR009000">
    <property type="entry name" value="Transl_B-barrel_sf"/>
</dbReference>
<dbReference type="NCBIfam" id="TIGR02273">
    <property type="entry name" value="16S_RimM"/>
    <property type="match status" value="1"/>
</dbReference>
<dbReference type="PANTHER" id="PTHR33692">
    <property type="entry name" value="RIBOSOME MATURATION FACTOR RIMM"/>
    <property type="match status" value="1"/>
</dbReference>
<dbReference type="PANTHER" id="PTHR33692:SF1">
    <property type="entry name" value="RIBOSOME MATURATION FACTOR RIMM"/>
    <property type="match status" value="1"/>
</dbReference>
<dbReference type="Pfam" id="PF05239">
    <property type="entry name" value="PRC"/>
    <property type="match status" value="1"/>
</dbReference>
<dbReference type="Pfam" id="PF01782">
    <property type="entry name" value="RimM"/>
    <property type="match status" value="1"/>
</dbReference>
<dbReference type="SUPFAM" id="SSF50346">
    <property type="entry name" value="PRC-barrel domain"/>
    <property type="match status" value="1"/>
</dbReference>
<dbReference type="SUPFAM" id="SSF50447">
    <property type="entry name" value="Translation proteins"/>
    <property type="match status" value="1"/>
</dbReference>
<keyword id="KW-0143">Chaperone</keyword>
<keyword id="KW-0963">Cytoplasm</keyword>
<keyword id="KW-0690">Ribosome biogenesis</keyword>
<keyword id="KW-0698">rRNA processing</keyword>
<gene>
    <name evidence="1" type="primary">rimM</name>
    <name type="ordered locus">Sez_1111</name>
</gene>
<feature type="chain" id="PRO_1000089521" description="Ribosome maturation factor RimM">
    <location>
        <begin position="1"/>
        <end position="172"/>
    </location>
</feature>
<feature type="domain" description="PRC barrel" evidence="1">
    <location>
        <begin position="95"/>
        <end position="168"/>
    </location>
</feature>
<organism>
    <name type="scientific">Streptococcus equi subsp. zooepidemicus (strain MGCS10565)</name>
    <dbReference type="NCBI Taxonomy" id="552526"/>
    <lineage>
        <taxon>Bacteria</taxon>
        <taxon>Bacillati</taxon>
        <taxon>Bacillota</taxon>
        <taxon>Bacilli</taxon>
        <taxon>Lactobacillales</taxon>
        <taxon>Streptococcaceae</taxon>
        <taxon>Streptococcus</taxon>
    </lineage>
</organism>